<reference key="1">
    <citation type="journal article" date="2001" name="Science">
        <title>The genome of the natural genetic engineer Agrobacterium tumefaciens C58.</title>
        <authorList>
            <person name="Wood D.W."/>
            <person name="Setubal J.C."/>
            <person name="Kaul R."/>
            <person name="Monks D.E."/>
            <person name="Kitajima J.P."/>
            <person name="Okura V.K."/>
            <person name="Zhou Y."/>
            <person name="Chen L."/>
            <person name="Wood G.E."/>
            <person name="Almeida N.F. Jr."/>
            <person name="Woo L."/>
            <person name="Chen Y."/>
            <person name="Paulsen I.T."/>
            <person name="Eisen J.A."/>
            <person name="Karp P.D."/>
            <person name="Bovee D. Sr."/>
            <person name="Chapman P."/>
            <person name="Clendenning J."/>
            <person name="Deatherage G."/>
            <person name="Gillet W."/>
            <person name="Grant C."/>
            <person name="Kutyavin T."/>
            <person name="Levy R."/>
            <person name="Li M.-J."/>
            <person name="McClelland E."/>
            <person name="Palmieri A."/>
            <person name="Raymond C."/>
            <person name="Rouse G."/>
            <person name="Saenphimmachak C."/>
            <person name="Wu Z."/>
            <person name="Romero P."/>
            <person name="Gordon D."/>
            <person name="Zhang S."/>
            <person name="Yoo H."/>
            <person name="Tao Y."/>
            <person name="Biddle P."/>
            <person name="Jung M."/>
            <person name="Krespan W."/>
            <person name="Perry M."/>
            <person name="Gordon-Kamm B."/>
            <person name="Liao L."/>
            <person name="Kim S."/>
            <person name="Hendrick C."/>
            <person name="Zhao Z.-Y."/>
            <person name="Dolan M."/>
            <person name="Chumley F."/>
            <person name="Tingey S.V."/>
            <person name="Tomb J.-F."/>
            <person name="Gordon M.P."/>
            <person name="Olson M.V."/>
            <person name="Nester E.W."/>
        </authorList>
    </citation>
    <scope>NUCLEOTIDE SEQUENCE [LARGE SCALE GENOMIC DNA]</scope>
    <source>
        <strain>C58 / ATCC 33970</strain>
    </source>
</reference>
<reference key="2">
    <citation type="journal article" date="2001" name="Science">
        <title>Genome sequence of the plant pathogen and biotechnology agent Agrobacterium tumefaciens C58.</title>
        <authorList>
            <person name="Goodner B."/>
            <person name="Hinkle G."/>
            <person name="Gattung S."/>
            <person name="Miller N."/>
            <person name="Blanchard M."/>
            <person name="Qurollo B."/>
            <person name="Goldman B.S."/>
            <person name="Cao Y."/>
            <person name="Askenazi M."/>
            <person name="Halling C."/>
            <person name="Mullin L."/>
            <person name="Houmiel K."/>
            <person name="Gordon J."/>
            <person name="Vaudin M."/>
            <person name="Iartchouk O."/>
            <person name="Epp A."/>
            <person name="Liu F."/>
            <person name="Wollam C."/>
            <person name="Allinger M."/>
            <person name="Doughty D."/>
            <person name="Scott C."/>
            <person name="Lappas C."/>
            <person name="Markelz B."/>
            <person name="Flanagan C."/>
            <person name="Crowell C."/>
            <person name="Gurson J."/>
            <person name="Lomo C."/>
            <person name="Sear C."/>
            <person name="Strub G."/>
            <person name="Cielo C."/>
            <person name="Slater S."/>
        </authorList>
    </citation>
    <scope>NUCLEOTIDE SEQUENCE [LARGE SCALE GENOMIC DNA]</scope>
    <source>
        <strain>C58 / ATCC 33970</strain>
    </source>
</reference>
<name>PUR2_AGRFC</name>
<accession>Q8UHN3</accession>
<feature type="chain" id="PRO_0000151432" description="Phosphoribosylamine--glycine ligase">
    <location>
        <begin position="1"/>
        <end position="423"/>
    </location>
</feature>
<feature type="domain" description="ATP-grasp" evidence="2">
    <location>
        <begin position="107"/>
        <end position="312"/>
    </location>
</feature>
<feature type="binding site" evidence="2">
    <location>
        <begin position="133"/>
        <end position="193"/>
    </location>
    <ligand>
        <name>ATP</name>
        <dbReference type="ChEBI" id="CHEBI:30616"/>
    </ligand>
</feature>
<feature type="binding site" evidence="2">
    <location>
        <position position="282"/>
    </location>
    <ligand>
        <name>Mg(2+)</name>
        <dbReference type="ChEBI" id="CHEBI:18420"/>
    </ligand>
</feature>
<feature type="binding site" evidence="2">
    <location>
        <position position="284"/>
    </location>
    <ligand>
        <name>Mg(2+)</name>
        <dbReference type="ChEBI" id="CHEBI:18420"/>
    </ligand>
</feature>
<evidence type="ECO:0000250" key="1"/>
<evidence type="ECO:0000255" key="2">
    <source>
        <dbReference type="HAMAP-Rule" id="MF_00138"/>
    </source>
</evidence>
<protein>
    <recommendedName>
        <fullName evidence="2">Phosphoribosylamine--glycine ligase</fullName>
        <ecNumber evidence="2">6.3.4.13</ecNumber>
    </recommendedName>
    <alternativeName>
        <fullName evidence="2">GARS</fullName>
    </alternativeName>
    <alternativeName>
        <fullName evidence="2">Glycinamide ribonucleotide synthetase</fullName>
    </alternativeName>
    <alternativeName>
        <fullName evidence="2">Phosphoribosylglycinamide synthetase</fullName>
    </alternativeName>
</protein>
<comment type="catalytic activity">
    <reaction evidence="2">
        <text>5-phospho-beta-D-ribosylamine + glycine + ATP = N(1)-(5-phospho-beta-D-ribosyl)glycinamide + ADP + phosphate + H(+)</text>
        <dbReference type="Rhea" id="RHEA:17453"/>
        <dbReference type="ChEBI" id="CHEBI:15378"/>
        <dbReference type="ChEBI" id="CHEBI:30616"/>
        <dbReference type="ChEBI" id="CHEBI:43474"/>
        <dbReference type="ChEBI" id="CHEBI:57305"/>
        <dbReference type="ChEBI" id="CHEBI:58681"/>
        <dbReference type="ChEBI" id="CHEBI:143788"/>
        <dbReference type="ChEBI" id="CHEBI:456216"/>
        <dbReference type="EC" id="6.3.4.13"/>
    </reaction>
</comment>
<comment type="cofactor">
    <cofactor evidence="1">
        <name>Mg(2+)</name>
        <dbReference type="ChEBI" id="CHEBI:18420"/>
    </cofactor>
    <cofactor evidence="1">
        <name>Mn(2+)</name>
        <dbReference type="ChEBI" id="CHEBI:29035"/>
    </cofactor>
    <text evidence="1">Binds 1 Mg(2+) or Mn(2+) ion per subunit.</text>
</comment>
<comment type="pathway">
    <text evidence="2">Purine metabolism; IMP biosynthesis via de novo pathway; N(1)-(5-phospho-D-ribosyl)glycinamide from 5-phospho-alpha-D-ribose 1-diphosphate: step 2/2.</text>
</comment>
<comment type="similarity">
    <text evidence="2">Belongs to the GARS family.</text>
</comment>
<sequence>MKVLLIGSGGREHALAWKIAQSPLIDALYAAPGNPGIADHATLVSLDVEDHAAVIAFAKEKAIDFVVIGPEAPLVAGLADDLRAAGIATFGPSKAAAQLEGSKGFTKDLCARYDIPTGAYERFKAAEPAKDYVRAQGAPIVIKADGLAAGKGVTVAMTEAEALAAIDDCFDGAFGTAGTEVVVEAFLDGEEASFFCLSDGKTALALATAQDHKRVGDGDTGPNTGGMGAYSPAPVMTPAMVERTMKEIIEPTISGMAKDGNPFSGVFFAGLMITAKGPELIEYNVRFGDPECQVLMMRLKSDLLPILYATATGTLDKVQAEWRDDAALTVVLASKGYPGAYDKNTPIAHIPEASEEAKVFHAGTALKDGKLVATGGRVLNVTAFGRNVTEAQARAYALADKVEWENGFCRRDIGWQAIAREKA</sequence>
<keyword id="KW-0067">ATP-binding</keyword>
<keyword id="KW-0436">Ligase</keyword>
<keyword id="KW-0460">Magnesium</keyword>
<keyword id="KW-0464">Manganese</keyword>
<keyword id="KW-0479">Metal-binding</keyword>
<keyword id="KW-0547">Nucleotide-binding</keyword>
<keyword id="KW-0658">Purine biosynthesis</keyword>
<keyword id="KW-1185">Reference proteome</keyword>
<proteinExistence type="inferred from homology"/>
<organism>
    <name type="scientific">Agrobacterium fabrum (strain C58 / ATCC 33970)</name>
    <name type="common">Agrobacterium tumefaciens (strain C58)</name>
    <dbReference type="NCBI Taxonomy" id="176299"/>
    <lineage>
        <taxon>Bacteria</taxon>
        <taxon>Pseudomonadati</taxon>
        <taxon>Pseudomonadota</taxon>
        <taxon>Alphaproteobacteria</taxon>
        <taxon>Hyphomicrobiales</taxon>
        <taxon>Rhizobiaceae</taxon>
        <taxon>Rhizobium/Agrobacterium group</taxon>
        <taxon>Agrobacterium</taxon>
        <taxon>Agrobacterium tumefaciens complex</taxon>
    </lineage>
</organism>
<gene>
    <name evidence="2" type="primary">purD</name>
    <name type="ordered locus">Atu0647</name>
    <name type="ORF">AGR_C_1152</name>
</gene>
<dbReference type="EC" id="6.3.4.13" evidence="2"/>
<dbReference type="EMBL" id="AE007869">
    <property type="protein sequence ID" value="AAK86455.2"/>
    <property type="molecule type" value="Genomic_DNA"/>
</dbReference>
<dbReference type="PIR" id="AI2655">
    <property type="entry name" value="AI2655"/>
</dbReference>
<dbReference type="PIR" id="F97437">
    <property type="entry name" value="F97437"/>
</dbReference>
<dbReference type="RefSeq" id="NP_353670.2">
    <property type="nucleotide sequence ID" value="NC_003062.2"/>
</dbReference>
<dbReference type="RefSeq" id="WP_010971036.1">
    <property type="nucleotide sequence ID" value="NC_003062.2"/>
</dbReference>
<dbReference type="SMR" id="Q8UHN3"/>
<dbReference type="STRING" id="176299.Atu0647"/>
<dbReference type="EnsemblBacteria" id="AAK86455">
    <property type="protein sequence ID" value="AAK86455"/>
    <property type="gene ID" value="Atu0647"/>
</dbReference>
<dbReference type="GeneID" id="1132685"/>
<dbReference type="KEGG" id="atu:Atu0647"/>
<dbReference type="PATRIC" id="fig|176299.10.peg.640"/>
<dbReference type="eggNOG" id="COG0151">
    <property type="taxonomic scope" value="Bacteria"/>
</dbReference>
<dbReference type="HOGENOM" id="CLU_027420_3_1_5"/>
<dbReference type="OrthoDB" id="9807240at2"/>
<dbReference type="PhylomeDB" id="Q8UHN3"/>
<dbReference type="UniPathway" id="UPA00074">
    <property type="reaction ID" value="UER00125"/>
</dbReference>
<dbReference type="Proteomes" id="UP000000813">
    <property type="component" value="Chromosome circular"/>
</dbReference>
<dbReference type="GO" id="GO:0005524">
    <property type="term" value="F:ATP binding"/>
    <property type="evidence" value="ECO:0007669"/>
    <property type="project" value="UniProtKB-KW"/>
</dbReference>
<dbReference type="GO" id="GO:0046872">
    <property type="term" value="F:metal ion binding"/>
    <property type="evidence" value="ECO:0007669"/>
    <property type="project" value="UniProtKB-KW"/>
</dbReference>
<dbReference type="GO" id="GO:0004637">
    <property type="term" value="F:phosphoribosylamine-glycine ligase activity"/>
    <property type="evidence" value="ECO:0007669"/>
    <property type="project" value="UniProtKB-UniRule"/>
</dbReference>
<dbReference type="GO" id="GO:0006189">
    <property type="term" value="P:'de novo' IMP biosynthetic process"/>
    <property type="evidence" value="ECO:0007669"/>
    <property type="project" value="UniProtKB-UniRule"/>
</dbReference>
<dbReference type="GO" id="GO:0009113">
    <property type="term" value="P:purine nucleobase biosynthetic process"/>
    <property type="evidence" value="ECO:0007669"/>
    <property type="project" value="InterPro"/>
</dbReference>
<dbReference type="FunFam" id="3.30.470.20:FF:000031">
    <property type="entry name" value="Phosphoribosylamine--glycine ligase"/>
    <property type="match status" value="1"/>
</dbReference>
<dbReference type="FunFam" id="3.40.50.20:FF:000006">
    <property type="entry name" value="Phosphoribosylamine--glycine ligase, chloroplastic"/>
    <property type="match status" value="1"/>
</dbReference>
<dbReference type="FunFam" id="3.90.600.10:FF:000001">
    <property type="entry name" value="Trifunctional purine biosynthetic protein adenosine-3"/>
    <property type="match status" value="1"/>
</dbReference>
<dbReference type="Gene3D" id="3.40.50.20">
    <property type="match status" value="1"/>
</dbReference>
<dbReference type="Gene3D" id="3.30.1490.20">
    <property type="entry name" value="ATP-grasp fold, A domain"/>
    <property type="match status" value="1"/>
</dbReference>
<dbReference type="Gene3D" id="3.30.470.20">
    <property type="entry name" value="ATP-grasp fold, B domain"/>
    <property type="match status" value="1"/>
</dbReference>
<dbReference type="Gene3D" id="3.90.600.10">
    <property type="entry name" value="Phosphoribosylglycinamide synthetase, C-terminal domain"/>
    <property type="match status" value="1"/>
</dbReference>
<dbReference type="HAMAP" id="MF_00138">
    <property type="entry name" value="GARS"/>
    <property type="match status" value="1"/>
</dbReference>
<dbReference type="InterPro" id="IPR011761">
    <property type="entry name" value="ATP-grasp"/>
</dbReference>
<dbReference type="InterPro" id="IPR013815">
    <property type="entry name" value="ATP_grasp_subdomain_1"/>
</dbReference>
<dbReference type="InterPro" id="IPR016185">
    <property type="entry name" value="PreATP-grasp_dom_sf"/>
</dbReference>
<dbReference type="InterPro" id="IPR020561">
    <property type="entry name" value="PRibGlycinamid_synth_ATP-grasp"/>
</dbReference>
<dbReference type="InterPro" id="IPR000115">
    <property type="entry name" value="PRibGlycinamide_synth"/>
</dbReference>
<dbReference type="InterPro" id="IPR020560">
    <property type="entry name" value="PRibGlycinamide_synth_C-dom"/>
</dbReference>
<dbReference type="InterPro" id="IPR037123">
    <property type="entry name" value="PRibGlycinamide_synth_C_sf"/>
</dbReference>
<dbReference type="InterPro" id="IPR020559">
    <property type="entry name" value="PRibGlycinamide_synth_CS"/>
</dbReference>
<dbReference type="InterPro" id="IPR020562">
    <property type="entry name" value="PRibGlycinamide_synth_N"/>
</dbReference>
<dbReference type="InterPro" id="IPR011054">
    <property type="entry name" value="Rudment_hybrid_motif"/>
</dbReference>
<dbReference type="NCBIfam" id="TIGR00877">
    <property type="entry name" value="purD"/>
    <property type="match status" value="1"/>
</dbReference>
<dbReference type="PANTHER" id="PTHR43472">
    <property type="entry name" value="PHOSPHORIBOSYLAMINE--GLYCINE LIGASE"/>
    <property type="match status" value="1"/>
</dbReference>
<dbReference type="PANTHER" id="PTHR43472:SF1">
    <property type="entry name" value="PHOSPHORIBOSYLAMINE--GLYCINE LIGASE, CHLOROPLASTIC"/>
    <property type="match status" value="1"/>
</dbReference>
<dbReference type="Pfam" id="PF01071">
    <property type="entry name" value="GARS_A"/>
    <property type="match status" value="1"/>
</dbReference>
<dbReference type="Pfam" id="PF02843">
    <property type="entry name" value="GARS_C"/>
    <property type="match status" value="1"/>
</dbReference>
<dbReference type="Pfam" id="PF02844">
    <property type="entry name" value="GARS_N"/>
    <property type="match status" value="1"/>
</dbReference>
<dbReference type="SMART" id="SM01209">
    <property type="entry name" value="GARS_A"/>
    <property type="match status" value="1"/>
</dbReference>
<dbReference type="SMART" id="SM01210">
    <property type="entry name" value="GARS_C"/>
    <property type="match status" value="1"/>
</dbReference>
<dbReference type="SUPFAM" id="SSF56059">
    <property type="entry name" value="Glutathione synthetase ATP-binding domain-like"/>
    <property type="match status" value="1"/>
</dbReference>
<dbReference type="SUPFAM" id="SSF52440">
    <property type="entry name" value="PreATP-grasp domain"/>
    <property type="match status" value="1"/>
</dbReference>
<dbReference type="SUPFAM" id="SSF51246">
    <property type="entry name" value="Rudiment single hybrid motif"/>
    <property type="match status" value="1"/>
</dbReference>
<dbReference type="PROSITE" id="PS50975">
    <property type="entry name" value="ATP_GRASP"/>
    <property type="match status" value="1"/>
</dbReference>
<dbReference type="PROSITE" id="PS00184">
    <property type="entry name" value="GARS"/>
    <property type="match status" value="1"/>
</dbReference>